<accession>A7E558</accession>
<dbReference type="EMBL" id="CH476621">
    <property type="protein sequence ID" value="EDN91030.1"/>
    <property type="molecule type" value="Genomic_DNA"/>
</dbReference>
<dbReference type="RefSeq" id="XP_001598344.1">
    <property type="nucleotide sequence ID" value="XM_001598294.1"/>
</dbReference>
<dbReference type="SMR" id="A7E558"/>
<dbReference type="FunCoup" id="A7E558">
    <property type="interactions" value="537"/>
</dbReference>
<dbReference type="STRING" id="665079.A7E558"/>
<dbReference type="GlyCosmos" id="A7E558">
    <property type="glycosylation" value="2 sites, No reported glycans"/>
</dbReference>
<dbReference type="EnsemblFungi" id="EDN91030">
    <property type="protein sequence ID" value="EDN91030"/>
    <property type="gene ID" value="SS1G_00430"/>
</dbReference>
<dbReference type="GeneID" id="5494635"/>
<dbReference type="KEGG" id="ssl:SS1G_00430"/>
<dbReference type="VEuPathDB" id="FungiDB:sscle_03g027180"/>
<dbReference type="eggNOG" id="KOG1444">
    <property type="taxonomic scope" value="Eukaryota"/>
</dbReference>
<dbReference type="HOGENOM" id="CLU_025360_1_2_1"/>
<dbReference type="InParanoid" id="A7E558"/>
<dbReference type="OMA" id="VWMLINC"/>
<dbReference type="OrthoDB" id="417037at2759"/>
<dbReference type="Proteomes" id="UP000001312">
    <property type="component" value="Unassembled WGS sequence"/>
</dbReference>
<dbReference type="GO" id="GO:0030659">
    <property type="term" value="C:cytoplasmic vesicle membrane"/>
    <property type="evidence" value="ECO:0007669"/>
    <property type="project" value="UniProtKB-SubCell"/>
</dbReference>
<dbReference type="GO" id="GO:0005789">
    <property type="term" value="C:endoplasmic reticulum membrane"/>
    <property type="evidence" value="ECO:0007669"/>
    <property type="project" value="UniProtKB-SubCell"/>
</dbReference>
<dbReference type="GO" id="GO:0005794">
    <property type="term" value="C:Golgi apparatus"/>
    <property type="evidence" value="ECO:0000318"/>
    <property type="project" value="GO_Central"/>
</dbReference>
<dbReference type="GO" id="GO:0000139">
    <property type="term" value="C:Golgi membrane"/>
    <property type="evidence" value="ECO:0007669"/>
    <property type="project" value="UniProtKB-SubCell"/>
</dbReference>
<dbReference type="GO" id="GO:0015297">
    <property type="term" value="F:antiporter activity"/>
    <property type="evidence" value="ECO:0000318"/>
    <property type="project" value="GO_Central"/>
</dbReference>
<dbReference type="GO" id="GO:0005458">
    <property type="term" value="F:GDP-mannose transmembrane transporter activity"/>
    <property type="evidence" value="ECO:0000318"/>
    <property type="project" value="GO_Central"/>
</dbReference>
<dbReference type="GO" id="GO:1990570">
    <property type="term" value="P:GDP-mannose transmembrane transport"/>
    <property type="evidence" value="ECO:0000318"/>
    <property type="project" value="GO_Central"/>
</dbReference>
<dbReference type="InterPro" id="IPR050186">
    <property type="entry name" value="TPT_transporter"/>
</dbReference>
<dbReference type="NCBIfam" id="TIGR00803">
    <property type="entry name" value="nst"/>
    <property type="match status" value="1"/>
</dbReference>
<dbReference type="PANTHER" id="PTHR11132">
    <property type="entry name" value="SOLUTE CARRIER FAMILY 35"/>
    <property type="match status" value="1"/>
</dbReference>
<dbReference type="SUPFAM" id="SSF103481">
    <property type="entry name" value="Multidrug resistance efflux transporter EmrE"/>
    <property type="match status" value="1"/>
</dbReference>
<keyword id="KW-0968">Cytoplasmic vesicle</keyword>
<keyword id="KW-0256">Endoplasmic reticulum</keyword>
<keyword id="KW-0325">Glycoprotein</keyword>
<keyword id="KW-0333">Golgi apparatus</keyword>
<keyword id="KW-0472">Membrane</keyword>
<keyword id="KW-1185">Reference proteome</keyword>
<keyword id="KW-0762">Sugar transport</keyword>
<keyword id="KW-0812">Transmembrane</keyword>
<keyword id="KW-1133">Transmembrane helix</keyword>
<keyword id="KW-0813">Transport</keyword>
<reference key="1">
    <citation type="journal article" date="2011" name="PLoS Genet.">
        <title>Genomic analysis of the necrotrophic fungal pathogens Sclerotinia sclerotiorum and Botrytis cinerea.</title>
        <authorList>
            <person name="Amselem J."/>
            <person name="Cuomo C.A."/>
            <person name="van Kan J.A.L."/>
            <person name="Viaud M."/>
            <person name="Benito E.P."/>
            <person name="Couloux A."/>
            <person name="Coutinho P.M."/>
            <person name="de Vries R.P."/>
            <person name="Dyer P.S."/>
            <person name="Fillinger S."/>
            <person name="Fournier E."/>
            <person name="Gout L."/>
            <person name="Hahn M."/>
            <person name="Kohn L."/>
            <person name="Lapalu N."/>
            <person name="Plummer K.M."/>
            <person name="Pradier J.-M."/>
            <person name="Quevillon E."/>
            <person name="Sharon A."/>
            <person name="Simon A."/>
            <person name="ten Have A."/>
            <person name="Tudzynski B."/>
            <person name="Tudzynski P."/>
            <person name="Wincker P."/>
            <person name="Andrew M."/>
            <person name="Anthouard V."/>
            <person name="Beever R.E."/>
            <person name="Beffa R."/>
            <person name="Benoit I."/>
            <person name="Bouzid O."/>
            <person name="Brault B."/>
            <person name="Chen Z."/>
            <person name="Choquer M."/>
            <person name="Collemare J."/>
            <person name="Cotton P."/>
            <person name="Danchin E.G."/>
            <person name="Da Silva C."/>
            <person name="Gautier A."/>
            <person name="Giraud C."/>
            <person name="Giraud T."/>
            <person name="Gonzalez C."/>
            <person name="Grossetete S."/>
            <person name="Gueldener U."/>
            <person name="Henrissat B."/>
            <person name="Howlett B.J."/>
            <person name="Kodira C."/>
            <person name="Kretschmer M."/>
            <person name="Lappartient A."/>
            <person name="Leroch M."/>
            <person name="Levis C."/>
            <person name="Mauceli E."/>
            <person name="Neuveglise C."/>
            <person name="Oeser B."/>
            <person name="Pearson M."/>
            <person name="Poulain J."/>
            <person name="Poussereau N."/>
            <person name="Quesneville H."/>
            <person name="Rascle C."/>
            <person name="Schumacher J."/>
            <person name="Segurens B."/>
            <person name="Sexton A."/>
            <person name="Silva E."/>
            <person name="Sirven C."/>
            <person name="Soanes D.M."/>
            <person name="Talbot N.J."/>
            <person name="Templeton M."/>
            <person name="Yandava C."/>
            <person name="Yarden O."/>
            <person name="Zeng Q."/>
            <person name="Rollins J.A."/>
            <person name="Lebrun M.-H."/>
            <person name="Dickman M."/>
        </authorList>
    </citation>
    <scope>NUCLEOTIDE SEQUENCE [LARGE SCALE GENOMIC DNA]</scope>
    <source>
        <strain>ATCC 18683 / 1980 / Ss-1</strain>
    </source>
</reference>
<evidence type="ECO:0000250" key="1"/>
<evidence type="ECO:0000255" key="2"/>
<evidence type="ECO:0000256" key="3">
    <source>
        <dbReference type="SAM" id="MobiDB-lite"/>
    </source>
</evidence>
<evidence type="ECO:0000305" key="4"/>
<comment type="function">
    <text evidence="1">Involved in the import of GDP-mannose from the cytoplasm into the Golgi lumen.</text>
</comment>
<comment type="subunit">
    <text evidence="1">Homooligomer.</text>
</comment>
<comment type="subcellular location">
    <subcellularLocation>
        <location evidence="1">Golgi apparatus membrane</location>
        <topology evidence="1">Multi-pass membrane protein</topology>
    </subcellularLocation>
    <subcellularLocation>
        <location evidence="1">Cytoplasmic vesicle membrane</location>
        <topology evidence="1">Multi-pass membrane protein</topology>
    </subcellularLocation>
    <subcellularLocation>
        <location evidence="1">Endoplasmic reticulum membrane</location>
        <topology evidence="1">Multi-pass membrane protein</topology>
    </subcellularLocation>
</comment>
<comment type="similarity">
    <text evidence="4">Belongs to the TPT transporter family. SLC35D subfamily.</text>
</comment>
<proteinExistence type="inferred from homology"/>
<name>GMT_SCLS1</name>
<feature type="chain" id="PRO_0000333536" description="GDP-mannose transporter">
    <location>
        <begin position="1"/>
        <end position="391"/>
    </location>
</feature>
<feature type="topological domain" description="Cytoplasmic" evidence="1">
    <location>
        <begin position="1"/>
        <end position="44"/>
    </location>
</feature>
<feature type="transmembrane region" description="Helical" evidence="2">
    <location>
        <begin position="45"/>
        <end position="65"/>
    </location>
</feature>
<feature type="topological domain" description="Lumenal" evidence="1">
    <location>
        <begin position="66"/>
        <end position="75"/>
    </location>
</feature>
<feature type="transmembrane region" description="Helical" evidence="2">
    <location>
        <begin position="76"/>
        <end position="96"/>
    </location>
</feature>
<feature type="topological domain" description="Cytoplasmic" evidence="1">
    <location>
        <begin position="97"/>
        <end position="115"/>
    </location>
</feature>
<feature type="transmembrane region" description="Helical" evidence="2">
    <location>
        <begin position="116"/>
        <end position="138"/>
    </location>
</feature>
<feature type="topological domain" description="Lumenal" evidence="1">
    <location>
        <begin position="139"/>
        <end position="141"/>
    </location>
</feature>
<feature type="transmembrane region" description="Helical" evidence="2">
    <location>
        <begin position="142"/>
        <end position="164"/>
    </location>
</feature>
<feature type="topological domain" description="Cytoplasmic" evidence="1">
    <location>
        <begin position="165"/>
        <end position="170"/>
    </location>
</feature>
<feature type="transmembrane region" description="Helical" evidence="2">
    <location>
        <begin position="171"/>
        <end position="193"/>
    </location>
</feature>
<feature type="topological domain" description="Lumenal" evidence="1">
    <location>
        <begin position="194"/>
        <end position="209"/>
    </location>
</feature>
<feature type="transmembrane region" description="Helical" evidence="2">
    <location>
        <begin position="210"/>
        <end position="230"/>
    </location>
</feature>
<feature type="topological domain" description="Cytoplasmic" evidence="1">
    <location>
        <begin position="231"/>
        <end position="245"/>
    </location>
</feature>
<feature type="transmembrane region" description="Helical" evidence="2">
    <location>
        <begin position="246"/>
        <end position="266"/>
    </location>
</feature>
<feature type="topological domain" description="Lumenal" evidence="1">
    <location>
        <begin position="267"/>
        <end position="284"/>
    </location>
</feature>
<feature type="transmembrane region" description="Helical" evidence="2">
    <location>
        <begin position="285"/>
        <end position="305"/>
    </location>
</feature>
<feature type="topological domain" description="Cytoplasmic" evidence="1">
    <location>
        <begin position="306"/>
        <end position="313"/>
    </location>
</feature>
<feature type="transmembrane region" description="Helical" evidence="2">
    <location>
        <begin position="314"/>
        <end position="336"/>
    </location>
</feature>
<feature type="topological domain" description="Lumenal" evidence="1">
    <location>
        <begin position="337"/>
        <end position="339"/>
    </location>
</feature>
<feature type="transmembrane region" description="Helical" evidence="2">
    <location>
        <begin position="340"/>
        <end position="359"/>
    </location>
</feature>
<feature type="topological domain" description="Cytoplasmic" evidence="1">
    <location>
        <begin position="360"/>
        <end position="391"/>
    </location>
</feature>
<feature type="region of interest" description="Disordered" evidence="3">
    <location>
        <begin position="1"/>
        <end position="28"/>
    </location>
</feature>
<feature type="region of interest" description="Disordered" evidence="3">
    <location>
        <begin position="369"/>
        <end position="391"/>
    </location>
</feature>
<feature type="compositionally biased region" description="Basic and acidic residues" evidence="3">
    <location>
        <begin position="1"/>
        <end position="11"/>
    </location>
</feature>
<feature type="glycosylation site" description="N-linked (GlcNAc...) asparagine" evidence="2">
    <location>
        <position position="267"/>
    </location>
</feature>
<feature type="glycosylation site" description="N-linked (GlcNAc...) asparagine" evidence="2">
    <location>
        <position position="272"/>
    </location>
</feature>
<organism>
    <name type="scientific">Sclerotinia sclerotiorum (strain ATCC 18683 / 1980 / Ss-1)</name>
    <name type="common">White mold</name>
    <name type="synonym">Whetzelinia sclerotiorum</name>
    <dbReference type="NCBI Taxonomy" id="665079"/>
    <lineage>
        <taxon>Eukaryota</taxon>
        <taxon>Fungi</taxon>
        <taxon>Dikarya</taxon>
        <taxon>Ascomycota</taxon>
        <taxon>Pezizomycotina</taxon>
        <taxon>Leotiomycetes</taxon>
        <taxon>Helotiales</taxon>
        <taxon>Sclerotiniaceae</taxon>
        <taxon>Sclerotinia</taxon>
    </lineage>
</organism>
<gene>
    <name type="primary">vrg4</name>
    <name type="ORF">SS1G_00430</name>
</gene>
<protein>
    <recommendedName>
        <fullName>GDP-mannose transporter</fullName>
        <shortName>GMT</shortName>
    </recommendedName>
</protein>
<sequence length="391" mass="42590">MDDKKNEDVEMRNFNGRSSPSQRDPFISKPGAAKRGGSSFDLSNVTNSPGISILAYCLASISMTVTNKYCVSGSNWNLNFFYLAIQSVVCIIAIIICKQAGLITNLAPFDTKKAKTWFPISLLLVGMIYTSTKALQFLSVPVYTIFKNLTIIVIAYGEVLWFGGSVTPSALFSFGLMVLSSVVAAWADIQHALYGGGATQTKEAADALSTLNAGYAWMGMNVFCTAAYVLSMRKVIKKMNFKDWDTMFYNNLLTIPVLFVCSFVFENWSSENLTKNFPLETRNNLILGMIYSGLATIFISYCSAWCIRVTSSTTYSMVGALNKLPIAVSGLVFFAAPVTFGSVSAIFIGFVSGIVYAWAKVRQNQSKGSVLPTTQPVMSASSQSNRDAAKA</sequence>